<gene>
    <name evidence="1" type="primary">rpsS</name>
    <name type="ordered locus">SCO4706</name>
    <name type="ORF">SCD31.31</name>
</gene>
<organism>
    <name type="scientific">Streptomyces coelicolor (strain ATCC BAA-471 / A3(2) / M145)</name>
    <dbReference type="NCBI Taxonomy" id="100226"/>
    <lineage>
        <taxon>Bacteria</taxon>
        <taxon>Bacillati</taxon>
        <taxon>Actinomycetota</taxon>
        <taxon>Actinomycetes</taxon>
        <taxon>Kitasatosporales</taxon>
        <taxon>Streptomycetaceae</taxon>
        <taxon>Streptomyces</taxon>
        <taxon>Streptomyces albidoflavus group</taxon>
    </lineage>
</organism>
<reference key="1">
    <citation type="journal article" date="2002" name="Nature">
        <title>Complete genome sequence of the model actinomycete Streptomyces coelicolor A3(2).</title>
        <authorList>
            <person name="Bentley S.D."/>
            <person name="Chater K.F."/>
            <person name="Cerdeno-Tarraga A.-M."/>
            <person name="Challis G.L."/>
            <person name="Thomson N.R."/>
            <person name="James K.D."/>
            <person name="Harris D.E."/>
            <person name="Quail M.A."/>
            <person name="Kieser H."/>
            <person name="Harper D."/>
            <person name="Bateman A."/>
            <person name="Brown S."/>
            <person name="Chandra G."/>
            <person name="Chen C.W."/>
            <person name="Collins M."/>
            <person name="Cronin A."/>
            <person name="Fraser A."/>
            <person name="Goble A."/>
            <person name="Hidalgo J."/>
            <person name="Hornsby T."/>
            <person name="Howarth S."/>
            <person name="Huang C.-H."/>
            <person name="Kieser T."/>
            <person name="Larke L."/>
            <person name="Murphy L.D."/>
            <person name="Oliver K."/>
            <person name="O'Neil S."/>
            <person name="Rabbinowitsch E."/>
            <person name="Rajandream M.A."/>
            <person name="Rutherford K.M."/>
            <person name="Rutter S."/>
            <person name="Seeger K."/>
            <person name="Saunders D."/>
            <person name="Sharp S."/>
            <person name="Squares R."/>
            <person name="Squares S."/>
            <person name="Taylor K."/>
            <person name="Warren T."/>
            <person name="Wietzorrek A."/>
            <person name="Woodward J.R."/>
            <person name="Barrell B.G."/>
            <person name="Parkhill J."/>
            <person name="Hopwood D.A."/>
        </authorList>
    </citation>
    <scope>NUCLEOTIDE SEQUENCE [LARGE SCALE GENOMIC DNA]</scope>
    <source>
        <strain>ATCC BAA-471 / A3(2) / M145</strain>
    </source>
</reference>
<sequence>MPRSLKKGPFVDDHLIKKVDTQNEAGTKNVIKTWSRRSMIVPAMLGHTIAVHNGKTHIPVFVTESMVGHKLGEFSPTRTFRGHVKDDRKSKRR</sequence>
<accession>Q9L0D6</accession>
<protein>
    <recommendedName>
        <fullName evidence="1">Small ribosomal subunit protein uS19</fullName>
    </recommendedName>
    <alternativeName>
        <fullName evidence="3">30S ribosomal protein S19</fullName>
    </alternativeName>
</protein>
<comment type="function">
    <text evidence="1">Protein S19 forms a complex with S13 that binds strongly to the 16S ribosomal RNA.</text>
</comment>
<comment type="similarity">
    <text evidence="1">Belongs to the universal ribosomal protein uS19 family.</text>
</comment>
<keyword id="KW-1185">Reference proteome</keyword>
<keyword id="KW-0687">Ribonucleoprotein</keyword>
<keyword id="KW-0689">Ribosomal protein</keyword>
<keyword id="KW-0694">RNA-binding</keyword>
<keyword id="KW-0699">rRNA-binding</keyword>
<evidence type="ECO:0000255" key="1">
    <source>
        <dbReference type="HAMAP-Rule" id="MF_00531"/>
    </source>
</evidence>
<evidence type="ECO:0000256" key="2">
    <source>
        <dbReference type="SAM" id="MobiDB-lite"/>
    </source>
</evidence>
<evidence type="ECO:0000305" key="3"/>
<dbReference type="EMBL" id="AL939121">
    <property type="protein sequence ID" value="CAB82074.1"/>
    <property type="molecule type" value="Genomic_DNA"/>
</dbReference>
<dbReference type="RefSeq" id="NP_628865.1">
    <property type="nucleotide sequence ID" value="NC_003888.3"/>
</dbReference>
<dbReference type="RefSeq" id="WP_003974263.1">
    <property type="nucleotide sequence ID" value="NZ_VNID01000016.1"/>
</dbReference>
<dbReference type="SMR" id="Q9L0D6"/>
<dbReference type="FunCoup" id="Q9L0D6">
    <property type="interactions" value="152"/>
</dbReference>
<dbReference type="STRING" id="100226.gene:17762355"/>
<dbReference type="PaxDb" id="100226-SCO4706"/>
<dbReference type="GeneID" id="96655952"/>
<dbReference type="KEGG" id="sco:SCO4706"/>
<dbReference type="PATRIC" id="fig|100226.15.peg.4777"/>
<dbReference type="eggNOG" id="COG0185">
    <property type="taxonomic scope" value="Bacteria"/>
</dbReference>
<dbReference type="HOGENOM" id="CLU_144911_0_1_11"/>
<dbReference type="InParanoid" id="Q9L0D6"/>
<dbReference type="OrthoDB" id="9797833at2"/>
<dbReference type="PhylomeDB" id="Q9L0D6"/>
<dbReference type="Proteomes" id="UP000001973">
    <property type="component" value="Chromosome"/>
</dbReference>
<dbReference type="GO" id="GO:0005737">
    <property type="term" value="C:cytoplasm"/>
    <property type="evidence" value="ECO:0007669"/>
    <property type="project" value="UniProtKB-ARBA"/>
</dbReference>
<dbReference type="GO" id="GO:0015935">
    <property type="term" value="C:small ribosomal subunit"/>
    <property type="evidence" value="ECO:0007669"/>
    <property type="project" value="InterPro"/>
</dbReference>
<dbReference type="GO" id="GO:0019843">
    <property type="term" value="F:rRNA binding"/>
    <property type="evidence" value="ECO:0007669"/>
    <property type="project" value="UniProtKB-UniRule"/>
</dbReference>
<dbReference type="GO" id="GO:0003735">
    <property type="term" value="F:structural constituent of ribosome"/>
    <property type="evidence" value="ECO:0000318"/>
    <property type="project" value="GO_Central"/>
</dbReference>
<dbReference type="GO" id="GO:0000028">
    <property type="term" value="P:ribosomal small subunit assembly"/>
    <property type="evidence" value="ECO:0000318"/>
    <property type="project" value="GO_Central"/>
</dbReference>
<dbReference type="GO" id="GO:0006412">
    <property type="term" value="P:translation"/>
    <property type="evidence" value="ECO:0007669"/>
    <property type="project" value="UniProtKB-UniRule"/>
</dbReference>
<dbReference type="FunFam" id="3.30.860.10:FF:000001">
    <property type="entry name" value="30S ribosomal protein S19"/>
    <property type="match status" value="1"/>
</dbReference>
<dbReference type="Gene3D" id="3.30.860.10">
    <property type="entry name" value="30s Ribosomal Protein S19, Chain A"/>
    <property type="match status" value="1"/>
</dbReference>
<dbReference type="HAMAP" id="MF_00531">
    <property type="entry name" value="Ribosomal_uS19"/>
    <property type="match status" value="1"/>
</dbReference>
<dbReference type="InterPro" id="IPR002222">
    <property type="entry name" value="Ribosomal_uS19"/>
</dbReference>
<dbReference type="InterPro" id="IPR005732">
    <property type="entry name" value="Ribosomal_uS19_bac-type"/>
</dbReference>
<dbReference type="InterPro" id="IPR020934">
    <property type="entry name" value="Ribosomal_uS19_CS"/>
</dbReference>
<dbReference type="InterPro" id="IPR023575">
    <property type="entry name" value="Ribosomal_uS19_SF"/>
</dbReference>
<dbReference type="NCBIfam" id="TIGR01050">
    <property type="entry name" value="rpsS_bact"/>
    <property type="match status" value="1"/>
</dbReference>
<dbReference type="PANTHER" id="PTHR11880">
    <property type="entry name" value="RIBOSOMAL PROTEIN S19P FAMILY MEMBER"/>
    <property type="match status" value="1"/>
</dbReference>
<dbReference type="PANTHER" id="PTHR11880:SF8">
    <property type="entry name" value="SMALL RIBOSOMAL SUBUNIT PROTEIN US19M"/>
    <property type="match status" value="1"/>
</dbReference>
<dbReference type="Pfam" id="PF00203">
    <property type="entry name" value="Ribosomal_S19"/>
    <property type="match status" value="1"/>
</dbReference>
<dbReference type="PIRSF" id="PIRSF002144">
    <property type="entry name" value="Ribosomal_S19"/>
    <property type="match status" value="1"/>
</dbReference>
<dbReference type="PRINTS" id="PR00975">
    <property type="entry name" value="RIBOSOMALS19"/>
</dbReference>
<dbReference type="SUPFAM" id="SSF54570">
    <property type="entry name" value="Ribosomal protein S19"/>
    <property type="match status" value="1"/>
</dbReference>
<dbReference type="PROSITE" id="PS00323">
    <property type="entry name" value="RIBOSOMAL_S19"/>
    <property type="match status" value="1"/>
</dbReference>
<feature type="chain" id="PRO_0000129911" description="Small ribosomal subunit protein uS19">
    <location>
        <begin position="1"/>
        <end position="93"/>
    </location>
</feature>
<feature type="region of interest" description="Disordered" evidence="2">
    <location>
        <begin position="73"/>
        <end position="93"/>
    </location>
</feature>
<feature type="compositionally biased region" description="Basic and acidic residues" evidence="2">
    <location>
        <begin position="83"/>
        <end position="93"/>
    </location>
</feature>
<name>RS19_STRCO</name>
<proteinExistence type="inferred from homology"/>